<comment type="function">
    <text evidence="2">One of the essential components for the initiation of protein synthesis. Protects formylmethionyl-tRNA from spontaneous hydrolysis and promotes its binding to the 30S ribosomal subunits. Also involved in the hydrolysis of GTP during the formation of the 70S ribosomal complex.</text>
</comment>
<comment type="subcellular location">
    <subcellularLocation>
        <location evidence="2">Cytoplasm</location>
    </subcellularLocation>
</comment>
<comment type="similarity">
    <text evidence="2">Belongs to the TRAFAC class translation factor GTPase superfamily. Classic translation factor GTPase family. IF-2 subfamily.</text>
</comment>
<evidence type="ECO:0000250" key="1"/>
<evidence type="ECO:0000255" key="2">
    <source>
        <dbReference type="HAMAP-Rule" id="MF_00100"/>
    </source>
</evidence>
<evidence type="ECO:0000256" key="3">
    <source>
        <dbReference type="SAM" id="MobiDB-lite"/>
    </source>
</evidence>
<name>IF2_ACICJ</name>
<gene>
    <name evidence="2" type="primary">infB</name>
    <name type="ordered locus">Acry_0225</name>
</gene>
<protein>
    <recommendedName>
        <fullName evidence="2">Translation initiation factor IF-2</fullName>
    </recommendedName>
</protein>
<keyword id="KW-0963">Cytoplasm</keyword>
<keyword id="KW-0342">GTP-binding</keyword>
<keyword id="KW-0396">Initiation factor</keyword>
<keyword id="KW-0547">Nucleotide-binding</keyword>
<keyword id="KW-0648">Protein biosynthesis</keyword>
<keyword id="KW-1185">Reference proteome</keyword>
<sequence length="887" mass="95356">MSDEQDQGETKGRLSLRPVNRGELGRTVDAGSVRQSFSHGRSKVVQVEVRKKRGGAAGAETGRPSAPSRASGGAAAPRGLTAAEQAARQRAVVEQQREAARLEAERREQEKISILSAAEEARRKAEEEARAAEEAERLRAEEEARRREEEEAERRRAAEASQATAAPPAPAAAASPRAAMPAPTAAPARPGAAPARRTAPVPPATSASETLRLRAARTGRDEEEEASRPARRPGSGAAPSRKPSVPAPKKVGDDRRRGARIDVQAALSGDDERVRSLASVRRQRDRERRQAELERLRSDQVRVVREVVLPETITVQELANRMAARVPEVVKSLMKLGVMATATQTIDADTAELVVEEFGHRSKRVSESDVELGLEGQEDSETDLKVRPPVVTIMGHVDHGKTSLLDALRSTDVAAREAGGITQHIGAYQVTLESGAKMTFIDTPGHEAFTAMRARGASVTDIVILVVAADDGVMPQTVEAIRHAKAANVPIIVAINKIDRPDANPNRVRSELLQYDIAVEAMGGETQDVEVSALKRQGLDALQEAILLQAELLDLKANPNRSAEGAVIESSLDRGRGPVATVLVQKGTLRQGDIVVAGTEQGRVRAMLDDHGQPLKDAGPSTPVEILGLSGVPGAGEVFVVVENEGRAREIAEFRQRKLREHAAAAGAAARGTLDQMLARIQAGEQKEVALVIKADVQGSAEAIQATVQKLGNDEVRVRVLLAGVGQITESDVQLAKASDAIIVAFNVRANAQARTLASRDGVDIRYYSIIYQVSDDIETMVKGKLAPIEREKFLGYAEIRQVFNITKVGKVAGCYVTEGLVKRGAGVRLLREGVVIHQGELSQLKRFKDDVREVARGYECGLSFAGFSDLREGDVVECYETETVPA</sequence>
<accession>A5FV21</accession>
<dbReference type="EMBL" id="CP000697">
    <property type="protein sequence ID" value="ABQ29453.1"/>
    <property type="molecule type" value="Genomic_DNA"/>
</dbReference>
<dbReference type="RefSeq" id="WP_011941367.1">
    <property type="nucleotide sequence ID" value="NC_009484.1"/>
</dbReference>
<dbReference type="SMR" id="A5FV21"/>
<dbReference type="STRING" id="349163.Acry_0225"/>
<dbReference type="KEGG" id="acr:Acry_0225"/>
<dbReference type="eggNOG" id="COG0532">
    <property type="taxonomic scope" value="Bacteria"/>
</dbReference>
<dbReference type="HOGENOM" id="CLU_006301_10_1_5"/>
<dbReference type="Proteomes" id="UP000000245">
    <property type="component" value="Chromosome"/>
</dbReference>
<dbReference type="GO" id="GO:0005737">
    <property type="term" value="C:cytoplasm"/>
    <property type="evidence" value="ECO:0007669"/>
    <property type="project" value="UniProtKB-SubCell"/>
</dbReference>
<dbReference type="GO" id="GO:0005525">
    <property type="term" value="F:GTP binding"/>
    <property type="evidence" value="ECO:0007669"/>
    <property type="project" value="UniProtKB-KW"/>
</dbReference>
<dbReference type="GO" id="GO:0003924">
    <property type="term" value="F:GTPase activity"/>
    <property type="evidence" value="ECO:0007669"/>
    <property type="project" value="UniProtKB-UniRule"/>
</dbReference>
<dbReference type="GO" id="GO:0097216">
    <property type="term" value="F:guanosine tetraphosphate binding"/>
    <property type="evidence" value="ECO:0007669"/>
    <property type="project" value="UniProtKB-ARBA"/>
</dbReference>
<dbReference type="GO" id="GO:0003743">
    <property type="term" value="F:translation initiation factor activity"/>
    <property type="evidence" value="ECO:0007669"/>
    <property type="project" value="UniProtKB-UniRule"/>
</dbReference>
<dbReference type="CDD" id="cd01887">
    <property type="entry name" value="IF2_eIF5B"/>
    <property type="match status" value="1"/>
</dbReference>
<dbReference type="CDD" id="cd03702">
    <property type="entry name" value="IF2_mtIF2_II"/>
    <property type="match status" value="1"/>
</dbReference>
<dbReference type="CDD" id="cd03692">
    <property type="entry name" value="mtIF2_IVc"/>
    <property type="match status" value="1"/>
</dbReference>
<dbReference type="FunFam" id="2.40.30.10:FF:000007">
    <property type="entry name" value="Translation initiation factor IF-2"/>
    <property type="match status" value="1"/>
</dbReference>
<dbReference type="FunFam" id="2.40.30.10:FF:000008">
    <property type="entry name" value="Translation initiation factor IF-2"/>
    <property type="match status" value="1"/>
</dbReference>
<dbReference type="FunFam" id="3.40.50.10050:FF:000001">
    <property type="entry name" value="Translation initiation factor IF-2"/>
    <property type="match status" value="1"/>
</dbReference>
<dbReference type="FunFam" id="3.40.50.300:FF:000019">
    <property type="entry name" value="Translation initiation factor IF-2"/>
    <property type="match status" value="1"/>
</dbReference>
<dbReference type="Gene3D" id="3.40.50.300">
    <property type="entry name" value="P-loop containing nucleotide triphosphate hydrolases"/>
    <property type="match status" value="1"/>
</dbReference>
<dbReference type="Gene3D" id="2.40.30.10">
    <property type="entry name" value="Translation factors"/>
    <property type="match status" value="2"/>
</dbReference>
<dbReference type="Gene3D" id="3.40.50.10050">
    <property type="entry name" value="Translation initiation factor IF- 2, domain 3"/>
    <property type="match status" value="1"/>
</dbReference>
<dbReference type="HAMAP" id="MF_00100_B">
    <property type="entry name" value="IF_2_B"/>
    <property type="match status" value="1"/>
</dbReference>
<dbReference type="InterPro" id="IPR053905">
    <property type="entry name" value="EF-G-like_DII"/>
</dbReference>
<dbReference type="InterPro" id="IPR004161">
    <property type="entry name" value="EFTu-like_2"/>
</dbReference>
<dbReference type="InterPro" id="IPR013575">
    <property type="entry name" value="IF2_assoc_dom_bac"/>
</dbReference>
<dbReference type="InterPro" id="IPR044145">
    <property type="entry name" value="IF2_II"/>
</dbReference>
<dbReference type="InterPro" id="IPR006847">
    <property type="entry name" value="IF2_N"/>
</dbReference>
<dbReference type="InterPro" id="IPR027417">
    <property type="entry name" value="P-loop_NTPase"/>
</dbReference>
<dbReference type="InterPro" id="IPR005225">
    <property type="entry name" value="Small_GTP-bd"/>
</dbReference>
<dbReference type="InterPro" id="IPR000795">
    <property type="entry name" value="T_Tr_GTP-bd_dom"/>
</dbReference>
<dbReference type="InterPro" id="IPR000178">
    <property type="entry name" value="TF_IF2_bacterial-like"/>
</dbReference>
<dbReference type="InterPro" id="IPR015760">
    <property type="entry name" value="TIF_IF2"/>
</dbReference>
<dbReference type="InterPro" id="IPR023115">
    <property type="entry name" value="TIF_IF2_dom3"/>
</dbReference>
<dbReference type="InterPro" id="IPR036925">
    <property type="entry name" value="TIF_IF2_dom3_sf"/>
</dbReference>
<dbReference type="InterPro" id="IPR009000">
    <property type="entry name" value="Transl_B-barrel_sf"/>
</dbReference>
<dbReference type="NCBIfam" id="TIGR00487">
    <property type="entry name" value="IF-2"/>
    <property type="match status" value="1"/>
</dbReference>
<dbReference type="NCBIfam" id="TIGR00231">
    <property type="entry name" value="small_GTP"/>
    <property type="match status" value="1"/>
</dbReference>
<dbReference type="PANTHER" id="PTHR43381:SF5">
    <property type="entry name" value="TR-TYPE G DOMAIN-CONTAINING PROTEIN"/>
    <property type="match status" value="1"/>
</dbReference>
<dbReference type="PANTHER" id="PTHR43381">
    <property type="entry name" value="TRANSLATION INITIATION FACTOR IF-2-RELATED"/>
    <property type="match status" value="1"/>
</dbReference>
<dbReference type="Pfam" id="PF22042">
    <property type="entry name" value="EF-G_D2"/>
    <property type="match status" value="1"/>
</dbReference>
<dbReference type="Pfam" id="PF00009">
    <property type="entry name" value="GTP_EFTU"/>
    <property type="match status" value="1"/>
</dbReference>
<dbReference type="Pfam" id="PF03144">
    <property type="entry name" value="GTP_EFTU_D2"/>
    <property type="match status" value="1"/>
</dbReference>
<dbReference type="Pfam" id="PF11987">
    <property type="entry name" value="IF-2"/>
    <property type="match status" value="1"/>
</dbReference>
<dbReference type="Pfam" id="PF08364">
    <property type="entry name" value="IF2_assoc"/>
    <property type="match status" value="1"/>
</dbReference>
<dbReference type="Pfam" id="PF04760">
    <property type="entry name" value="IF2_N"/>
    <property type="match status" value="1"/>
</dbReference>
<dbReference type="SUPFAM" id="SSF52156">
    <property type="entry name" value="Initiation factor IF2/eIF5b, domain 3"/>
    <property type="match status" value="1"/>
</dbReference>
<dbReference type="SUPFAM" id="SSF52540">
    <property type="entry name" value="P-loop containing nucleoside triphosphate hydrolases"/>
    <property type="match status" value="1"/>
</dbReference>
<dbReference type="SUPFAM" id="SSF50447">
    <property type="entry name" value="Translation proteins"/>
    <property type="match status" value="2"/>
</dbReference>
<dbReference type="PROSITE" id="PS51722">
    <property type="entry name" value="G_TR_2"/>
    <property type="match status" value="1"/>
</dbReference>
<dbReference type="PROSITE" id="PS01176">
    <property type="entry name" value="IF2"/>
    <property type="match status" value="1"/>
</dbReference>
<proteinExistence type="inferred from homology"/>
<organism>
    <name type="scientific">Acidiphilium cryptum (strain JF-5)</name>
    <dbReference type="NCBI Taxonomy" id="349163"/>
    <lineage>
        <taxon>Bacteria</taxon>
        <taxon>Pseudomonadati</taxon>
        <taxon>Pseudomonadota</taxon>
        <taxon>Alphaproteobacteria</taxon>
        <taxon>Acetobacterales</taxon>
        <taxon>Acidocellaceae</taxon>
        <taxon>Acidiphilium</taxon>
    </lineage>
</organism>
<feature type="chain" id="PRO_1000008189" description="Translation initiation factor IF-2">
    <location>
        <begin position="1"/>
        <end position="887"/>
    </location>
</feature>
<feature type="domain" description="tr-type G">
    <location>
        <begin position="386"/>
        <end position="556"/>
    </location>
</feature>
<feature type="region of interest" description="Disordered" evidence="3">
    <location>
        <begin position="1"/>
        <end position="259"/>
    </location>
</feature>
<feature type="region of interest" description="G1" evidence="1">
    <location>
        <begin position="395"/>
        <end position="402"/>
    </location>
</feature>
<feature type="region of interest" description="G2" evidence="1">
    <location>
        <begin position="420"/>
        <end position="424"/>
    </location>
</feature>
<feature type="region of interest" description="G3" evidence="1">
    <location>
        <begin position="442"/>
        <end position="445"/>
    </location>
</feature>
<feature type="region of interest" description="G4" evidence="1">
    <location>
        <begin position="496"/>
        <end position="499"/>
    </location>
</feature>
<feature type="region of interest" description="G5" evidence="1">
    <location>
        <begin position="532"/>
        <end position="534"/>
    </location>
</feature>
<feature type="compositionally biased region" description="Low complexity" evidence="3">
    <location>
        <begin position="62"/>
        <end position="94"/>
    </location>
</feature>
<feature type="compositionally biased region" description="Basic and acidic residues" evidence="3">
    <location>
        <begin position="95"/>
        <end position="111"/>
    </location>
</feature>
<feature type="compositionally biased region" description="Basic and acidic residues" evidence="3">
    <location>
        <begin position="119"/>
        <end position="158"/>
    </location>
</feature>
<feature type="compositionally biased region" description="Low complexity" evidence="3">
    <location>
        <begin position="159"/>
        <end position="210"/>
    </location>
</feature>
<feature type="compositionally biased region" description="Basic and acidic residues" evidence="3">
    <location>
        <begin position="250"/>
        <end position="259"/>
    </location>
</feature>
<feature type="binding site" evidence="2">
    <location>
        <begin position="395"/>
        <end position="402"/>
    </location>
    <ligand>
        <name>GTP</name>
        <dbReference type="ChEBI" id="CHEBI:37565"/>
    </ligand>
</feature>
<feature type="binding site" evidence="2">
    <location>
        <begin position="442"/>
        <end position="446"/>
    </location>
    <ligand>
        <name>GTP</name>
        <dbReference type="ChEBI" id="CHEBI:37565"/>
    </ligand>
</feature>
<feature type="binding site" evidence="2">
    <location>
        <begin position="496"/>
        <end position="499"/>
    </location>
    <ligand>
        <name>GTP</name>
        <dbReference type="ChEBI" id="CHEBI:37565"/>
    </ligand>
</feature>
<reference key="1">
    <citation type="submission" date="2007-05" db="EMBL/GenBank/DDBJ databases">
        <title>Complete sequence of chromosome of Acidiphilium cryptum JF-5.</title>
        <authorList>
            <consortium name="US DOE Joint Genome Institute"/>
            <person name="Copeland A."/>
            <person name="Lucas S."/>
            <person name="Lapidus A."/>
            <person name="Barry K."/>
            <person name="Detter J.C."/>
            <person name="Glavina del Rio T."/>
            <person name="Hammon N."/>
            <person name="Israni S."/>
            <person name="Dalin E."/>
            <person name="Tice H."/>
            <person name="Pitluck S."/>
            <person name="Sims D."/>
            <person name="Brettin T."/>
            <person name="Bruce D."/>
            <person name="Han C."/>
            <person name="Schmutz J."/>
            <person name="Larimer F."/>
            <person name="Land M."/>
            <person name="Hauser L."/>
            <person name="Kyrpides N."/>
            <person name="Kim E."/>
            <person name="Magnuson T."/>
            <person name="Richardson P."/>
        </authorList>
    </citation>
    <scope>NUCLEOTIDE SEQUENCE [LARGE SCALE GENOMIC DNA]</scope>
    <source>
        <strain>JF-5</strain>
    </source>
</reference>